<gene>
    <name evidence="1" type="primary">murQ</name>
    <name type="ordered locus">SSON_2517</name>
</gene>
<comment type="function">
    <text evidence="1">Specifically catalyzes the cleavage of the D-lactyl ether substituent of MurNAc 6-phosphate, producing GlcNAc 6-phosphate and D-lactate. Together with AnmK, is also required for the utilization of anhydro-N-acetylmuramic acid (anhMurNAc) either imported from the medium or derived from its own cell wall murein, and thus plays a role in cell wall recycling.</text>
</comment>
<comment type="catalytic activity">
    <reaction evidence="1">
        <text>N-acetyl-D-muramate 6-phosphate + H2O = N-acetyl-D-glucosamine 6-phosphate + (R)-lactate</text>
        <dbReference type="Rhea" id="RHEA:26410"/>
        <dbReference type="ChEBI" id="CHEBI:15377"/>
        <dbReference type="ChEBI" id="CHEBI:16004"/>
        <dbReference type="ChEBI" id="CHEBI:57513"/>
        <dbReference type="ChEBI" id="CHEBI:58722"/>
        <dbReference type="EC" id="4.2.1.126"/>
    </reaction>
</comment>
<comment type="pathway">
    <text evidence="1">Amino-sugar metabolism; 1,6-anhydro-N-acetylmuramate degradation.</text>
</comment>
<comment type="pathway">
    <text evidence="1">Amino-sugar metabolism; N-acetylmuramate degradation.</text>
</comment>
<comment type="pathway">
    <text evidence="1">Cell wall biogenesis; peptidoglycan recycling.</text>
</comment>
<comment type="subunit">
    <text evidence="1">Homodimer.</text>
</comment>
<comment type="induction">
    <text evidence="1">Induced by MurNAc 6-phosphate that releases the repressor MurR from the DNA. Repressed by MurR in the absence of MurNAc 6-phosphate.</text>
</comment>
<comment type="miscellaneous">
    <text evidence="1">A lyase-type mechanism (elimination/hydration) is suggested for the cleavage of the lactyl ether bond of MurNAc 6-phosphate, with the formation of an alpha,beta-unsaturated aldehyde intermediate with (E)-stereochemistry, followed by the syn addition of water to give product.</text>
</comment>
<comment type="similarity">
    <text evidence="1">Belongs to the GCKR-like family. MurNAc-6-P etherase subfamily.</text>
</comment>
<feature type="chain" id="PRO_0000249652" description="N-acetylmuramic acid 6-phosphate etherase">
    <location>
        <begin position="1"/>
        <end position="298"/>
    </location>
</feature>
<feature type="domain" description="SIS" evidence="1">
    <location>
        <begin position="55"/>
        <end position="218"/>
    </location>
</feature>
<feature type="active site" description="Proton donor" evidence="1">
    <location>
        <position position="83"/>
    </location>
</feature>
<feature type="active site" evidence="1">
    <location>
        <position position="114"/>
    </location>
</feature>
<proteinExistence type="inferred from homology"/>
<keyword id="KW-0119">Carbohydrate metabolism</keyword>
<keyword id="KW-0456">Lyase</keyword>
<keyword id="KW-1185">Reference proteome</keyword>
<protein>
    <recommendedName>
        <fullName evidence="1">N-acetylmuramic acid 6-phosphate etherase</fullName>
        <shortName evidence="1">MurNAc-6-P etherase</shortName>
        <ecNumber evidence="1">4.2.1.126</ecNumber>
    </recommendedName>
    <alternativeName>
        <fullName evidence="1">N-acetylmuramic acid 6-phosphate hydrolase</fullName>
    </alternativeName>
    <alternativeName>
        <fullName evidence="1">N-acetylmuramic acid 6-phosphate lyase</fullName>
    </alternativeName>
</protein>
<organism>
    <name type="scientific">Shigella sonnei (strain Ss046)</name>
    <dbReference type="NCBI Taxonomy" id="300269"/>
    <lineage>
        <taxon>Bacteria</taxon>
        <taxon>Pseudomonadati</taxon>
        <taxon>Pseudomonadota</taxon>
        <taxon>Gammaproteobacteria</taxon>
        <taxon>Enterobacterales</taxon>
        <taxon>Enterobacteriaceae</taxon>
        <taxon>Shigella</taxon>
    </lineage>
</organism>
<dbReference type="EC" id="4.2.1.126" evidence="1"/>
<dbReference type="EMBL" id="CP000038">
    <property type="protein sequence ID" value="AAZ89148.1"/>
    <property type="molecule type" value="Genomic_DNA"/>
</dbReference>
<dbReference type="RefSeq" id="WP_001175650.1">
    <property type="nucleotide sequence ID" value="NC_007384.1"/>
</dbReference>
<dbReference type="SMR" id="Q3YZB4"/>
<dbReference type="GeneID" id="93774703"/>
<dbReference type="KEGG" id="ssn:SSON_2517"/>
<dbReference type="HOGENOM" id="CLU_049049_1_1_6"/>
<dbReference type="UniPathway" id="UPA00342"/>
<dbReference type="UniPathway" id="UPA00343"/>
<dbReference type="UniPathway" id="UPA00544"/>
<dbReference type="Proteomes" id="UP000002529">
    <property type="component" value="Chromosome"/>
</dbReference>
<dbReference type="GO" id="GO:0097367">
    <property type="term" value="F:carbohydrate derivative binding"/>
    <property type="evidence" value="ECO:0007669"/>
    <property type="project" value="InterPro"/>
</dbReference>
<dbReference type="GO" id="GO:0016835">
    <property type="term" value="F:carbon-oxygen lyase activity"/>
    <property type="evidence" value="ECO:0007669"/>
    <property type="project" value="UniProtKB-UniRule"/>
</dbReference>
<dbReference type="GO" id="GO:0016803">
    <property type="term" value="F:ether hydrolase activity"/>
    <property type="evidence" value="ECO:0007669"/>
    <property type="project" value="TreeGrafter"/>
</dbReference>
<dbReference type="GO" id="GO:0097175">
    <property type="term" value="P:1,6-anhydro-N-acetyl-beta-muramic acid catabolic process"/>
    <property type="evidence" value="ECO:0007669"/>
    <property type="project" value="UniProtKB-UniRule"/>
</dbReference>
<dbReference type="GO" id="GO:0046348">
    <property type="term" value="P:amino sugar catabolic process"/>
    <property type="evidence" value="ECO:0007669"/>
    <property type="project" value="InterPro"/>
</dbReference>
<dbReference type="GO" id="GO:0097173">
    <property type="term" value="P:N-acetylmuramic acid catabolic process"/>
    <property type="evidence" value="ECO:0007669"/>
    <property type="project" value="UniProtKB-UniPathway"/>
</dbReference>
<dbReference type="GO" id="GO:0009254">
    <property type="term" value="P:peptidoglycan turnover"/>
    <property type="evidence" value="ECO:0007669"/>
    <property type="project" value="UniProtKB-UniRule"/>
</dbReference>
<dbReference type="CDD" id="cd05007">
    <property type="entry name" value="SIS_Etherase"/>
    <property type="match status" value="1"/>
</dbReference>
<dbReference type="FunFam" id="1.10.8.1080:FF:000001">
    <property type="entry name" value="N-acetylmuramic acid 6-phosphate etherase"/>
    <property type="match status" value="1"/>
</dbReference>
<dbReference type="FunFam" id="3.40.50.10490:FF:000014">
    <property type="entry name" value="N-acetylmuramic acid 6-phosphate etherase"/>
    <property type="match status" value="1"/>
</dbReference>
<dbReference type="Gene3D" id="1.10.8.1080">
    <property type="match status" value="1"/>
</dbReference>
<dbReference type="Gene3D" id="3.40.50.10490">
    <property type="entry name" value="Glucose-6-phosphate isomerase like protein, domain 1"/>
    <property type="match status" value="1"/>
</dbReference>
<dbReference type="HAMAP" id="MF_00068">
    <property type="entry name" value="MurQ"/>
    <property type="match status" value="1"/>
</dbReference>
<dbReference type="InterPro" id="IPR005488">
    <property type="entry name" value="Etherase_MurQ"/>
</dbReference>
<dbReference type="InterPro" id="IPR005486">
    <property type="entry name" value="Glucokinase_regulatory_CS"/>
</dbReference>
<dbReference type="InterPro" id="IPR040190">
    <property type="entry name" value="MURQ/GCKR"/>
</dbReference>
<dbReference type="InterPro" id="IPR001347">
    <property type="entry name" value="SIS_dom"/>
</dbReference>
<dbReference type="InterPro" id="IPR046348">
    <property type="entry name" value="SIS_dom_sf"/>
</dbReference>
<dbReference type="NCBIfam" id="TIGR00274">
    <property type="entry name" value="N-acetylmuramic acid 6-phosphate etherase"/>
    <property type="match status" value="1"/>
</dbReference>
<dbReference type="NCBIfam" id="NF003915">
    <property type="entry name" value="PRK05441.1"/>
    <property type="match status" value="1"/>
</dbReference>
<dbReference type="NCBIfam" id="NF009222">
    <property type="entry name" value="PRK12570.1"/>
    <property type="match status" value="1"/>
</dbReference>
<dbReference type="PANTHER" id="PTHR10088">
    <property type="entry name" value="GLUCOKINASE REGULATORY PROTEIN"/>
    <property type="match status" value="1"/>
</dbReference>
<dbReference type="PANTHER" id="PTHR10088:SF4">
    <property type="entry name" value="GLUCOKINASE REGULATORY PROTEIN"/>
    <property type="match status" value="1"/>
</dbReference>
<dbReference type="Pfam" id="PF22645">
    <property type="entry name" value="GKRP_SIS_N"/>
    <property type="match status" value="1"/>
</dbReference>
<dbReference type="SUPFAM" id="SSF53697">
    <property type="entry name" value="SIS domain"/>
    <property type="match status" value="1"/>
</dbReference>
<dbReference type="PROSITE" id="PS01272">
    <property type="entry name" value="GCKR"/>
    <property type="match status" value="1"/>
</dbReference>
<dbReference type="PROSITE" id="PS51464">
    <property type="entry name" value="SIS"/>
    <property type="match status" value="1"/>
</dbReference>
<name>MURQ_SHISS</name>
<evidence type="ECO:0000255" key="1">
    <source>
        <dbReference type="HAMAP-Rule" id="MF_00068"/>
    </source>
</evidence>
<accession>Q3YZB4</accession>
<reference key="1">
    <citation type="journal article" date="2005" name="Nucleic Acids Res.">
        <title>Genome dynamics and diversity of Shigella species, the etiologic agents of bacillary dysentery.</title>
        <authorList>
            <person name="Yang F."/>
            <person name="Yang J."/>
            <person name="Zhang X."/>
            <person name="Chen L."/>
            <person name="Jiang Y."/>
            <person name="Yan Y."/>
            <person name="Tang X."/>
            <person name="Wang J."/>
            <person name="Xiong Z."/>
            <person name="Dong J."/>
            <person name="Xue Y."/>
            <person name="Zhu Y."/>
            <person name="Xu X."/>
            <person name="Sun L."/>
            <person name="Chen S."/>
            <person name="Nie H."/>
            <person name="Peng J."/>
            <person name="Xu J."/>
            <person name="Wang Y."/>
            <person name="Yuan Z."/>
            <person name="Wen Y."/>
            <person name="Yao Z."/>
            <person name="Shen Y."/>
            <person name="Qiang B."/>
            <person name="Hou Y."/>
            <person name="Yu J."/>
            <person name="Jin Q."/>
        </authorList>
    </citation>
    <scope>NUCLEOTIDE SEQUENCE [LARGE SCALE GENOMIC DNA]</scope>
    <source>
        <strain>Ss046</strain>
    </source>
</reference>
<sequence length="298" mass="31257">MQLEKMITEGSNTASAEIDRVSTLEMCRIINDEDKTVPLAVERVLPDIAAAIDVIHAQVSGGGRLIYLGAGTSGRLGILDASECPPTYGVKPGLVVGLIAGGEYAIQHAVEGTEDSREGGINDLKNINLTAQDVVVGIAASGRTPYVIAGLEYARQLGCRTVGISCNPGSAVSTTAEFAITPIVGAEVVTGSSRMKAGTAQKLVLNMLSTGLMIKSGKVFGNLMVDVVATNEKLHVRQVNIVKNATGCNAEQAEAALIACERNCKTAIVMVLKNLDAAEAKKRLDQHGGFIRQVLDKE</sequence>